<organism>
    <name type="scientific">Arabidopsis thaliana</name>
    <name type="common">Mouse-ear cress</name>
    <dbReference type="NCBI Taxonomy" id="3702"/>
    <lineage>
        <taxon>Eukaryota</taxon>
        <taxon>Viridiplantae</taxon>
        <taxon>Streptophyta</taxon>
        <taxon>Embryophyta</taxon>
        <taxon>Tracheophyta</taxon>
        <taxon>Spermatophyta</taxon>
        <taxon>Magnoliopsida</taxon>
        <taxon>eudicotyledons</taxon>
        <taxon>Gunneridae</taxon>
        <taxon>Pentapetalae</taxon>
        <taxon>rosids</taxon>
        <taxon>malvids</taxon>
        <taxon>Brassicales</taxon>
        <taxon>Brassicaceae</taxon>
        <taxon>Camelineae</taxon>
        <taxon>Arabidopsis</taxon>
    </lineage>
</organism>
<keyword id="KW-0150">Chloroplast</keyword>
<keyword id="KW-0217">Developmental protein</keyword>
<keyword id="KW-0472">Membrane</keyword>
<keyword id="KW-0934">Plastid</keyword>
<keyword id="KW-1185">Reference proteome</keyword>
<keyword id="KW-0809">Transit peptide</keyword>
<keyword id="KW-0812">Transmembrane</keyword>
<keyword id="KW-1133">Transmembrane helix</keyword>
<protein>
    <recommendedName>
        <fullName evidence="5">Protein RETICULATA-RELATED 5, chloroplastic</fullName>
    </recommendedName>
</protein>
<dbReference type="EMBL" id="AC007020">
    <property type="protein sequence ID" value="AAD25674.1"/>
    <property type="molecule type" value="Genomic_DNA"/>
</dbReference>
<dbReference type="EMBL" id="CP002685">
    <property type="protein sequence ID" value="AEC09822.1"/>
    <property type="molecule type" value="Genomic_DNA"/>
</dbReference>
<dbReference type="EMBL" id="CP002685">
    <property type="protein sequence ID" value="AEC09823.1"/>
    <property type="molecule type" value="Genomic_DNA"/>
</dbReference>
<dbReference type="EMBL" id="AF410285">
    <property type="protein sequence ID" value="AAK95271.1"/>
    <property type="molecule type" value="mRNA"/>
</dbReference>
<dbReference type="EMBL" id="AY102131">
    <property type="protein sequence ID" value="AAM26698.1"/>
    <property type="molecule type" value="mRNA"/>
</dbReference>
<dbReference type="EMBL" id="AK226837">
    <property type="protein sequence ID" value="BAE98930.1"/>
    <property type="molecule type" value="mRNA"/>
</dbReference>
<dbReference type="PIR" id="A84829">
    <property type="entry name" value="A84829"/>
</dbReference>
<dbReference type="RefSeq" id="NP_565930.1">
    <property type="nucleotide sequence ID" value="NM_129600.4"/>
</dbReference>
<dbReference type="RefSeq" id="NP_850329.1">
    <property type="nucleotide sequence ID" value="NM_179998.2"/>
</dbReference>
<dbReference type="FunCoup" id="Q9SIY5">
    <property type="interactions" value="656"/>
</dbReference>
<dbReference type="STRING" id="3702.Q9SIY5"/>
<dbReference type="PaxDb" id="3702-AT2G40400.2"/>
<dbReference type="ProteomicsDB" id="226179"/>
<dbReference type="EnsemblPlants" id="AT2G40400.1">
    <property type="protein sequence ID" value="AT2G40400.1"/>
    <property type="gene ID" value="AT2G40400"/>
</dbReference>
<dbReference type="EnsemblPlants" id="AT2G40400.2">
    <property type="protein sequence ID" value="AT2G40400.2"/>
    <property type="gene ID" value="AT2G40400"/>
</dbReference>
<dbReference type="GeneID" id="818633"/>
<dbReference type="Gramene" id="AT2G40400.1">
    <property type="protein sequence ID" value="AT2G40400.1"/>
    <property type="gene ID" value="AT2G40400"/>
</dbReference>
<dbReference type="Gramene" id="AT2G40400.2">
    <property type="protein sequence ID" value="AT2G40400.2"/>
    <property type="gene ID" value="AT2G40400"/>
</dbReference>
<dbReference type="KEGG" id="ath:AT2G40400"/>
<dbReference type="Araport" id="AT2G40400"/>
<dbReference type="TAIR" id="AT2G40400">
    <property type="gene designation" value="BPG3"/>
</dbReference>
<dbReference type="eggNOG" id="ENOG502QPUQ">
    <property type="taxonomic scope" value="Eukaryota"/>
</dbReference>
<dbReference type="HOGENOM" id="CLU_011621_0_0_1"/>
<dbReference type="InParanoid" id="Q9SIY5"/>
<dbReference type="OMA" id="ETICITT"/>
<dbReference type="PhylomeDB" id="Q9SIY5"/>
<dbReference type="PRO" id="PR:Q9SIY5"/>
<dbReference type="Proteomes" id="UP000006548">
    <property type="component" value="Chromosome 2"/>
</dbReference>
<dbReference type="ExpressionAtlas" id="Q9SIY5">
    <property type="expression patterns" value="baseline and differential"/>
</dbReference>
<dbReference type="GO" id="GO:0009507">
    <property type="term" value="C:chloroplast"/>
    <property type="evidence" value="ECO:0000314"/>
    <property type="project" value="TAIR"/>
</dbReference>
<dbReference type="GO" id="GO:0031969">
    <property type="term" value="C:chloroplast membrane"/>
    <property type="evidence" value="ECO:0007669"/>
    <property type="project" value="UniProtKB-SubCell"/>
</dbReference>
<dbReference type="GO" id="GO:0015995">
    <property type="term" value="P:chlorophyll biosynthetic process"/>
    <property type="evidence" value="ECO:0000315"/>
    <property type="project" value="TAIR"/>
</dbReference>
<dbReference type="GO" id="GO:0009741">
    <property type="term" value="P:response to brassinosteroid"/>
    <property type="evidence" value="ECO:0000315"/>
    <property type="project" value="TAIR"/>
</dbReference>
<dbReference type="CDD" id="cd14727">
    <property type="entry name" value="ChanN-like"/>
    <property type="match status" value="1"/>
</dbReference>
<dbReference type="Gene3D" id="3.40.50.11550">
    <property type="match status" value="1"/>
</dbReference>
<dbReference type="InterPro" id="IPR007314">
    <property type="entry name" value="Cofac_haem-bd_dom"/>
</dbReference>
<dbReference type="InterPro" id="IPR021825">
    <property type="entry name" value="RETICULATA-related"/>
</dbReference>
<dbReference type="PANTHER" id="PTHR31620">
    <property type="entry name" value="PROTEIN RETICULATA-RELATED 2, CHLOROPLASTIC-RELATED"/>
    <property type="match status" value="1"/>
</dbReference>
<dbReference type="PANTHER" id="PTHR31620:SF2">
    <property type="entry name" value="PROTEIN RETICULATA-RELATED 5, CHLOROPLASTIC"/>
    <property type="match status" value="1"/>
</dbReference>
<dbReference type="Pfam" id="PF04187">
    <property type="entry name" value="Cofac_haem_bdg"/>
    <property type="match status" value="1"/>
</dbReference>
<dbReference type="Pfam" id="PF11891">
    <property type="entry name" value="RETICULATA-like"/>
    <property type="match status" value="1"/>
</dbReference>
<dbReference type="SUPFAM" id="SSF159501">
    <property type="entry name" value="EreA/ChaN-like"/>
    <property type="match status" value="1"/>
</dbReference>
<proteinExistence type="evidence at transcript level"/>
<comment type="function">
    <text evidence="7">May play a role in leaf development.</text>
</comment>
<comment type="subcellular location">
    <subcellularLocation>
        <location evidence="1">Plastid</location>
        <location evidence="1">Chloroplast membrane</location>
        <topology evidence="2">Multi-pass membrane protein</topology>
    </subcellularLocation>
</comment>
<comment type="disruption phenotype">
    <text evidence="4">No visible phenotype under normal growth conditions.</text>
</comment>
<comment type="similarity">
    <text evidence="6">Belongs to the RETICULATA family.</text>
</comment>
<sequence>MKPTTNGGLLASQSSSSFSFPRFRGQLPIIFSANNNQKKKNLPNPNVVTLCLHSHSNVSSSQIAVTRRAILVAPPLLAAAASLFLSISSAASAETSAESVALPPVATAPPPPPVEKEEAITSRIYDASVLGEPMAVGKDKKRVWEKLLNARIVYLGEAEQVPTRDDKVLELEIVRNLRKRCIESDRQLSLALEAFPLDLQEQLNQYMDKRMDGEVLKSYVSHWPVQRWQEYEPLLSYCRDNGVKLIACGTPLKVLRTVQAEGIRGLSESERKLYTPPAGSGFISGFTSFSRSSSLNMNPLTQIVPFGPSSYLSAQARVVEDHTMSQVIVQAVADGGGTGMLVVVTGANHVEYGSRGTGLPARISRKIPKKSQLVVLLDPERQFLRKEGESPVADFLWYSAARPCSRNCFDRAEIARVMNAAGRRRDALPQDIQKGLDLGLVSPEILQNFFDLEQYPLISELTQRFQGFRERLLADPKFLNRLAIEEAISITTTLVAQYEKRKENFFEELDYVITDSVRASVVDFFTVWLPAPTLSFISYADETIGPNSIDALRGLLGSIPDNAFQKSLGGQEWTLSLRIASVIIGGLKLAGVGVVSSFAAVGSSNALYAIRKFIKPELGVGEQAKRSPMLKTALVYGGYLGTSSNIRYQIIAGLIEHRISDELSSQPLLVNMISFVVRVANSYFGTQQWIDLARSTGLQTQKSVTTSNQIPEVASQSTVEYSTTEEASMDDLKNQ</sequence>
<reference key="1">
    <citation type="journal article" date="1999" name="Nature">
        <title>Sequence and analysis of chromosome 2 of the plant Arabidopsis thaliana.</title>
        <authorList>
            <person name="Lin X."/>
            <person name="Kaul S."/>
            <person name="Rounsley S.D."/>
            <person name="Shea T.P."/>
            <person name="Benito M.-I."/>
            <person name="Town C.D."/>
            <person name="Fujii C.Y."/>
            <person name="Mason T.M."/>
            <person name="Bowman C.L."/>
            <person name="Barnstead M.E."/>
            <person name="Feldblyum T.V."/>
            <person name="Buell C.R."/>
            <person name="Ketchum K.A."/>
            <person name="Lee J.J."/>
            <person name="Ronning C.M."/>
            <person name="Koo H.L."/>
            <person name="Moffat K.S."/>
            <person name="Cronin L.A."/>
            <person name="Shen M."/>
            <person name="Pai G."/>
            <person name="Van Aken S."/>
            <person name="Umayam L."/>
            <person name="Tallon L.J."/>
            <person name="Gill J.E."/>
            <person name="Adams M.D."/>
            <person name="Carrera A.J."/>
            <person name="Creasy T.H."/>
            <person name="Goodman H.M."/>
            <person name="Somerville C.R."/>
            <person name="Copenhaver G.P."/>
            <person name="Preuss D."/>
            <person name="Nierman W.C."/>
            <person name="White O."/>
            <person name="Eisen J.A."/>
            <person name="Salzberg S.L."/>
            <person name="Fraser C.M."/>
            <person name="Venter J.C."/>
        </authorList>
    </citation>
    <scope>NUCLEOTIDE SEQUENCE [LARGE SCALE GENOMIC DNA]</scope>
    <source>
        <strain>cv. Columbia</strain>
    </source>
</reference>
<reference key="2">
    <citation type="journal article" date="2017" name="Plant J.">
        <title>Araport11: a complete reannotation of the Arabidopsis thaliana reference genome.</title>
        <authorList>
            <person name="Cheng C.Y."/>
            <person name="Krishnakumar V."/>
            <person name="Chan A.P."/>
            <person name="Thibaud-Nissen F."/>
            <person name="Schobel S."/>
            <person name="Town C.D."/>
        </authorList>
    </citation>
    <scope>GENOME REANNOTATION</scope>
    <source>
        <strain>cv. Columbia</strain>
    </source>
</reference>
<reference key="3">
    <citation type="journal article" date="2003" name="Science">
        <title>Empirical analysis of transcriptional activity in the Arabidopsis genome.</title>
        <authorList>
            <person name="Yamada K."/>
            <person name="Lim J."/>
            <person name="Dale J.M."/>
            <person name="Chen H."/>
            <person name="Shinn P."/>
            <person name="Palm C.J."/>
            <person name="Southwick A.M."/>
            <person name="Wu H.C."/>
            <person name="Kim C.J."/>
            <person name="Nguyen M."/>
            <person name="Pham P.K."/>
            <person name="Cheuk R.F."/>
            <person name="Karlin-Newmann G."/>
            <person name="Liu S.X."/>
            <person name="Lam B."/>
            <person name="Sakano H."/>
            <person name="Wu T."/>
            <person name="Yu G."/>
            <person name="Miranda M."/>
            <person name="Quach H.L."/>
            <person name="Tripp M."/>
            <person name="Chang C.H."/>
            <person name="Lee J.M."/>
            <person name="Toriumi M.J."/>
            <person name="Chan M.M."/>
            <person name="Tang C.C."/>
            <person name="Onodera C.S."/>
            <person name="Deng J.M."/>
            <person name="Akiyama K."/>
            <person name="Ansari Y."/>
            <person name="Arakawa T."/>
            <person name="Banh J."/>
            <person name="Banno F."/>
            <person name="Bowser L."/>
            <person name="Brooks S.Y."/>
            <person name="Carninci P."/>
            <person name="Chao Q."/>
            <person name="Choy N."/>
            <person name="Enju A."/>
            <person name="Goldsmith A.D."/>
            <person name="Gurjal M."/>
            <person name="Hansen N.F."/>
            <person name="Hayashizaki Y."/>
            <person name="Johnson-Hopson C."/>
            <person name="Hsuan V.W."/>
            <person name="Iida K."/>
            <person name="Karnes M."/>
            <person name="Khan S."/>
            <person name="Koesema E."/>
            <person name="Ishida J."/>
            <person name="Jiang P.X."/>
            <person name="Jones T."/>
            <person name="Kawai J."/>
            <person name="Kamiya A."/>
            <person name="Meyers C."/>
            <person name="Nakajima M."/>
            <person name="Narusaka M."/>
            <person name="Seki M."/>
            <person name="Sakurai T."/>
            <person name="Satou M."/>
            <person name="Tamse R."/>
            <person name="Vaysberg M."/>
            <person name="Wallender E.K."/>
            <person name="Wong C."/>
            <person name="Yamamura Y."/>
            <person name="Yuan S."/>
            <person name="Shinozaki K."/>
            <person name="Davis R.W."/>
            <person name="Theologis A."/>
            <person name="Ecker J.R."/>
        </authorList>
    </citation>
    <scope>NUCLEOTIDE SEQUENCE [LARGE SCALE MRNA]</scope>
    <source>
        <strain>cv. Columbia</strain>
    </source>
</reference>
<reference key="4">
    <citation type="submission" date="2006-07" db="EMBL/GenBank/DDBJ databases">
        <title>Large-scale analysis of RIKEN Arabidopsis full-length (RAFL) cDNAs.</title>
        <authorList>
            <person name="Totoki Y."/>
            <person name="Seki M."/>
            <person name="Ishida J."/>
            <person name="Nakajima M."/>
            <person name="Enju A."/>
            <person name="Kamiya A."/>
            <person name="Narusaka M."/>
            <person name="Shin-i T."/>
            <person name="Nakagawa M."/>
            <person name="Sakamoto N."/>
            <person name="Oishi K."/>
            <person name="Kohara Y."/>
            <person name="Kobayashi M."/>
            <person name="Toyoda A."/>
            <person name="Sakaki Y."/>
            <person name="Sakurai T."/>
            <person name="Iida K."/>
            <person name="Akiyama K."/>
            <person name="Satou M."/>
            <person name="Toyoda T."/>
            <person name="Konagaya A."/>
            <person name="Carninci P."/>
            <person name="Kawai J."/>
            <person name="Hayashizaki Y."/>
            <person name="Shinozaki K."/>
        </authorList>
    </citation>
    <scope>NUCLEOTIDE SEQUENCE [LARGE SCALE MRNA]</scope>
    <source>
        <strain>cv. Columbia</strain>
    </source>
</reference>
<reference key="5">
    <citation type="journal article" date="2013" name="Plant Physiol.">
        <title>Functional redundancy and divergence within the Arabidopsis RETICULATA-RELATED gene family.</title>
        <authorList>
            <person name="Perez-Perez J.M."/>
            <person name="Esteve-Bruna D."/>
            <person name="Gonzalez-Bayon R."/>
            <person name="Kangasjarvi S."/>
            <person name="Caldana C."/>
            <person name="Hannah M.A."/>
            <person name="Willmitzer L."/>
            <person name="Ponce M.R."/>
            <person name="Micol J.L."/>
        </authorList>
    </citation>
    <scope>FUNCTION</scope>
    <scope>GENE FAMILY</scope>
    <scope>NOMENCLATURE</scope>
    <scope>DISRUPTION PHENOTYPE</scope>
</reference>
<accession>Q9SIY5</accession>
<accession>Q0WVB8</accession>
<feature type="transit peptide" description="Chloroplast" evidence="2">
    <location>
        <begin position="1"/>
        <end position="75"/>
    </location>
</feature>
<feature type="chain" id="PRO_0000433444" description="Protein RETICULATA-RELATED 5, chloroplastic" evidence="2">
    <location>
        <begin position="76"/>
        <end position="735"/>
    </location>
</feature>
<feature type="transmembrane region" description="Helical" evidence="2">
    <location>
        <begin position="519"/>
        <end position="539"/>
    </location>
</feature>
<feature type="transmembrane region" description="Helical" evidence="2">
    <location>
        <begin position="582"/>
        <end position="602"/>
    </location>
</feature>
<feature type="region of interest" description="Disordered" evidence="3">
    <location>
        <begin position="714"/>
        <end position="735"/>
    </location>
</feature>
<feature type="compositionally biased region" description="Polar residues" evidence="3">
    <location>
        <begin position="714"/>
        <end position="726"/>
    </location>
</feature>
<feature type="sequence conflict" description="In Ref. 4; BAE98930." evidence="6" ref="4">
    <original>I</original>
    <variation>V</variation>
    <location>
        <position position="650"/>
    </location>
</feature>
<name>RER5_ARATH</name>
<evidence type="ECO:0000250" key="1">
    <source>
        <dbReference type="UniProtKB" id="Q9C9Z2"/>
    </source>
</evidence>
<evidence type="ECO:0000255" key="2"/>
<evidence type="ECO:0000256" key="3">
    <source>
        <dbReference type="SAM" id="MobiDB-lite"/>
    </source>
</evidence>
<evidence type="ECO:0000269" key="4">
    <source>
    </source>
</evidence>
<evidence type="ECO:0000303" key="5">
    <source>
    </source>
</evidence>
<evidence type="ECO:0000305" key="6"/>
<evidence type="ECO:0000305" key="7">
    <source>
    </source>
</evidence>
<evidence type="ECO:0000312" key="8">
    <source>
        <dbReference type="Araport" id="AT2G40400"/>
    </source>
</evidence>
<gene>
    <name evidence="5" type="primary">RER5</name>
    <name evidence="8" type="ordered locus">At2g40400</name>
</gene>